<reference key="1">
    <citation type="journal article" date="2003" name="Mol. Microbiol.">
        <title>Genome-based analysis of virulence genes in a non-biofilm-forming Staphylococcus epidermidis strain (ATCC 12228).</title>
        <authorList>
            <person name="Zhang Y.-Q."/>
            <person name="Ren S.-X."/>
            <person name="Li H.-L."/>
            <person name="Wang Y.-X."/>
            <person name="Fu G."/>
            <person name="Yang J."/>
            <person name="Qin Z.-Q."/>
            <person name="Miao Y.-G."/>
            <person name="Wang W.-Y."/>
            <person name="Chen R.-S."/>
            <person name="Shen Y."/>
            <person name="Chen Z."/>
            <person name="Yuan Z.-H."/>
            <person name="Zhao G.-P."/>
            <person name="Qu D."/>
            <person name="Danchin A."/>
            <person name="Wen Y.-M."/>
        </authorList>
    </citation>
    <scope>NUCLEOTIDE SEQUENCE [LARGE SCALE GENOMIC DNA]</scope>
    <source>
        <strain>ATCC 12228 / FDA PCI 1200</strain>
    </source>
</reference>
<organism>
    <name type="scientific">Staphylococcus epidermidis (strain ATCC 12228 / FDA PCI 1200)</name>
    <dbReference type="NCBI Taxonomy" id="176280"/>
    <lineage>
        <taxon>Bacteria</taxon>
        <taxon>Bacillati</taxon>
        <taxon>Bacillota</taxon>
        <taxon>Bacilli</taxon>
        <taxon>Bacillales</taxon>
        <taxon>Staphylococcaceae</taxon>
        <taxon>Staphylococcus</taxon>
    </lineage>
</organism>
<dbReference type="EC" id="3.1.-.-" evidence="1"/>
<dbReference type="EMBL" id="AE015929">
    <property type="protein sequence ID" value="AAO04561.1"/>
    <property type="molecule type" value="Genomic_DNA"/>
</dbReference>
<dbReference type="RefSeq" id="NP_764519.1">
    <property type="nucleotide sequence ID" value="NC_004461.1"/>
</dbReference>
<dbReference type="RefSeq" id="WP_001829512.1">
    <property type="nucleotide sequence ID" value="NZ_WBME01000001.1"/>
</dbReference>
<dbReference type="DNASU" id="1057669"/>
<dbReference type="GeneID" id="50018902"/>
<dbReference type="KEGG" id="sep:SE_0964"/>
<dbReference type="PATRIC" id="fig|176280.10.peg.938"/>
<dbReference type="eggNOG" id="COG1418">
    <property type="taxonomic scope" value="Bacteria"/>
</dbReference>
<dbReference type="HOGENOM" id="CLU_028328_1_0_9"/>
<dbReference type="OrthoDB" id="9803205at2"/>
<dbReference type="Proteomes" id="UP000001411">
    <property type="component" value="Chromosome"/>
</dbReference>
<dbReference type="GO" id="GO:0005886">
    <property type="term" value="C:plasma membrane"/>
    <property type="evidence" value="ECO:0007669"/>
    <property type="project" value="UniProtKB-SubCell"/>
</dbReference>
<dbReference type="GO" id="GO:0003723">
    <property type="term" value="F:RNA binding"/>
    <property type="evidence" value="ECO:0007669"/>
    <property type="project" value="UniProtKB-UniRule"/>
</dbReference>
<dbReference type="GO" id="GO:0004521">
    <property type="term" value="F:RNA endonuclease activity"/>
    <property type="evidence" value="ECO:0007669"/>
    <property type="project" value="UniProtKB-UniRule"/>
</dbReference>
<dbReference type="GO" id="GO:0006402">
    <property type="term" value="P:mRNA catabolic process"/>
    <property type="evidence" value="ECO:0007669"/>
    <property type="project" value="UniProtKB-UniRule"/>
</dbReference>
<dbReference type="CDD" id="cd00077">
    <property type="entry name" value="HDc"/>
    <property type="match status" value="1"/>
</dbReference>
<dbReference type="CDD" id="cd22431">
    <property type="entry name" value="KH-I_RNaseY"/>
    <property type="match status" value="1"/>
</dbReference>
<dbReference type="FunFam" id="1.10.3210.10:FF:000003">
    <property type="entry name" value="Ribonuclease Y"/>
    <property type="match status" value="1"/>
</dbReference>
<dbReference type="FunFam" id="3.30.1370.10:FF:000006">
    <property type="entry name" value="Ribonuclease Y"/>
    <property type="match status" value="1"/>
</dbReference>
<dbReference type="Gene3D" id="1.10.3210.10">
    <property type="entry name" value="Hypothetical protein af1432"/>
    <property type="match status" value="1"/>
</dbReference>
<dbReference type="Gene3D" id="3.30.1370.10">
    <property type="entry name" value="K Homology domain, type 1"/>
    <property type="match status" value="1"/>
</dbReference>
<dbReference type="HAMAP" id="MF_00335">
    <property type="entry name" value="RNase_Y"/>
    <property type="match status" value="1"/>
</dbReference>
<dbReference type="InterPro" id="IPR003607">
    <property type="entry name" value="HD/PDEase_dom"/>
</dbReference>
<dbReference type="InterPro" id="IPR006674">
    <property type="entry name" value="HD_domain"/>
</dbReference>
<dbReference type="InterPro" id="IPR006675">
    <property type="entry name" value="HDIG_dom"/>
</dbReference>
<dbReference type="InterPro" id="IPR004087">
    <property type="entry name" value="KH_dom"/>
</dbReference>
<dbReference type="InterPro" id="IPR004088">
    <property type="entry name" value="KH_dom_type_1"/>
</dbReference>
<dbReference type="InterPro" id="IPR036612">
    <property type="entry name" value="KH_dom_type_1_sf"/>
</dbReference>
<dbReference type="InterPro" id="IPR017705">
    <property type="entry name" value="Ribonuclease_Y"/>
</dbReference>
<dbReference type="InterPro" id="IPR022711">
    <property type="entry name" value="RNase_Y_N"/>
</dbReference>
<dbReference type="NCBIfam" id="TIGR00277">
    <property type="entry name" value="HDIG"/>
    <property type="match status" value="1"/>
</dbReference>
<dbReference type="NCBIfam" id="TIGR03319">
    <property type="entry name" value="RNase_Y"/>
    <property type="match status" value="1"/>
</dbReference>
<dbReference type="PANTHER" id="PTHR12826">
    <property type="entry name" value="RIBONUCLEASE Y"/>
    <property type="match status" value="1"/>
</dbReference>
<dbReference type="PANTHER" id="PTHR12826:SF15">
    <property type="entry name" value="RIBONUCLEASE Y"/>
    <property type="match status" value="1"/>
</dbReference>
<dbReference type="Pfam" id="PF01966">
    <property type="entry name" value="HD"/>
    <property type="match status" value="1"/>
</dbReference>
<dbReference type="Pfam" id="PF00013">
    <property type="entry name" value="KH_1"/>
    <property type="match status" value="1"/>
</dbReference>
<dbReference type="Pfam" id="PF12072">
    <property type="entry name" value="RNase_Y_N"/>
    <property type="match status" value="1"/>
</dbReference>
<dbReference type="SMART" id="SM00471">
    <property type="entry name" value="HDc"/>
    <property type="match status" value="1"/>
</dbReference>
<dbReference type="SMART" id="SM00322">
    <property type="entry name" value="KH"/>
    <property type="match status" value="1"/>
</dbReference>
<dbReference type="SUPFAM" id="SSF54791">
    <property type="entry name" value="Eukaryotic type KH-domain (KH-domain type I)"/>
    <property type="match status" value="1"/>
</dbReference>
<dbReference type="SUPFAM" id="SSF109604">
    <property type="entry name" value="HD-domain/PDEase-like"/>
    <property type="match status" value="1"/>
</dbReference>
<dbReference type="PROSITE" id="PS51831">
    <property type="entry name" value="HD"/>
    <property type="match status" value="1"/>
</dbReference>
<dbReference type="PROSITE" id="PS50084">
    <property type="entry name" value="KH_TYPE_1"/>
    <property type="match status" value="1"/>
</dbReference>
<comment type="function">
    <text evidence="1">Endoribonuclease that initiates mRNA decay.</text>
</comment>
<comment type="subcellular location">
    <subcellularLocation>
        <location evidence="1">Cell membrane</location>
        <topology evidence="1">Single-pass membrane protein</topology>
    </subcellularLocation>
</comment>
<comment type="similarity">
    <text evidence="1">Belongs to the RNase Y family.</text>
</comment>
<sequence length="519" mass="58697">MNLLSLLLILLGIILGVVVGYIVARNLLHQKQVQARQTADDIVSYANKEADNIKKEKLLEAKEENQILKEQAENELRERRGELQRQETRLLQKEENLDRKSDLLDKKDEILEQKESKLEERQQQVDAKESSVQTLIMKHEQELERISGLTQEEAVKEQLQRVEEELSQDIAILVKEKEKEAKEKVDKTAKELLATTVQRLAAEHTTESTVSVVNLPNDEMKGRIIGREGRNIRTLETLTGIDLIIDDTPEAVILSGFDPIRREIARTALVNLVSDGRIHPGRIEDMVEKARKEVDDIIRDAGEQATFEINVHNMHPDLVKILGRLNYRTSYGQNVLKHSIEVAHLSGMLAAELGEDVTLAKRAGLLHDVGKAIDHEVEGSHVEIGVELAKKYNENNIIINAIHSHHGDVEPTSIISILVAAADALSAARPGARKETLENYIRRLERLETLSESYDGVEKAFAIQAGREIRVVVSPEEIDDLKSYRLARDIKNQIEEELQYPGHIKVTVVRETRAIEYAK</sequence>
<evidence type="ECO:0000255" key="1">
    <source>
        <dbReference type="HAMAP-Rule" id="MF_00335"/>
    </source>
</evidence>
<evidence type="ECO:0000255" key="2">
    <source>
        <dbReference type="PROSITE-ProRule" id="PRU01175"/>
    </source>
</evidence>
<name>RNY_STAES</name>
<feature type="chain" id="PRO_0000163792" description="Ribonuclease Y">
    <location>
        <begin position="1"/>
        <end position="519"/>
    </location>
</feature>
<feature type="transmembrane region" description="Helical" evidence="1">
    <location>
        <begin position="3"/>
        <end position="23"/>
    </location>
</feature>
<feature type="domain" description="KH" evidence="1">
    <location>
        <begin position="209"/>
        <end position="269"/>
    </location>
</feature>
<feature type="domain" description="HD" evidence="2">
    <location>
        <begin position="335"/>
        <end position="428"/>
    </location>
</feature>
<protein>
    <recommendedName>
        <fullName evidence="1">Ribonuclease Y</fullName>
        <shortName evidence="1">RNase Y</shortName>
        <ecNumber evidence="1">3.1.-.-</ecNumber>
    </recommendedName>
</protein>
<accession>Q8CSS7</accession>
<gene>
    <name evidence="1" type="primary">rny</name>
    <name type="synonym">cvfA</name>
    <name type="ordered locus">SE_0964</name>
</gene>
<keyword id="KW-1003">Cell membrane</keyword>
<keyword id="KW-0255">Endonuclease</keyword>
<keyword id="KW-0378">Hydrolase</keyword>
<keyword id="KW-0472">Membrane</keyword>
<keyword id="KW-0540">Nuclease</keyword>
<keyword id="KW-0694">RNA-binding</keyword>
<keyword id="KW-0812">Transmembrane</keyword>
<keyword id="KW-1133">Transmembrane helix</keyword>
<keyword id="KW-0843">Virulence</keyword>
<proteinExistence type="inferred from homology"/>